<organismHost>
    <name type="scientific">Musa</name>
    <dbReference type="NCBI Taxonomy" id="4640"/>
</organismHost>
<organism>
    <name type="scientific">Banana bunchy top virus (isolate Autralia)</name>
    <name type="common">BBTV</name>
    <dbReference type="NCBI Taxonomy" id="645099"/>
    <lineage>
        <taxon>Viruses</taxon>
        <taxon>Monodnaviria</taxon>
        <taxon>Shotokuvirae</taxon>
        <taxon>Cressdnaviricota</taxon>
        <taxon>Arfiviricetes</taxon>
        <taxon>Mulpavirales</taxon>
        <taxon>Nanoviridae</taxon>
        <taxon>Babuvirus</taxon>
        <taxon>Babuvirus musae</taxon>
        <taxon>Banana bunchy top virus</taxon>
    </lineage>
</organism>
<reference key="1">
    <citation type="journal article" date="1995" name="J. Gen. Virol.">
        <title>The genome organization of banana bunchy top virus: analysis of six ssDNA components.</title>
        <authorList>
            <person name="Burns T.M."/>
            <person name="Harding R.M."/>
            <person name="Dale J.L."/>
        </authorList>
    </citation>
    <scope>NUCLEOTIDE SEQUENCE [GENOMIC DNA]</scope>
</reference>
<reference key="2">
    <citation type="journal article" date="1997" name="Arch. Virol.">
        <title>Banana bunchy top virus DNA-3 encodes the viral coat protein.</title>
        <authorList>
            <person name="Wanitchakorn R."/>
            <person name="Harding R.M."/>
            <person name="Dale J.L."/>
        </authorList>
    </citation>
    <scope>IDENTIFICATION</scope>
</reference>
<proteinExistence type="inferred from homology"/>
<gene>
    <name type="primary">DNA-S</name>
    <name type="synonym">C3</name>
</gene>
<protein>
    <recommendedName>
        <fullName>Capsid protein</fullName>
        <shortName>CP</shortName>
    </recommendedName>
    <alternativeName>
        <fullName>Coat protein</fullName>
    </alternativeName>
</protein>
<name>CAPSD_BBTVA</name>
<dbReference type="EMBL" id="L41574">
    <property type="protein sequence ID" value="AAA87368.1"/>
    <property type="molecule type" value="Genomic_DNA"/>
</dbReference>
<dbReference type="RefSeq" id="NP_604477.1">
    <property type="nucleotide sequence ID" value="NC_003473.1"/>
</dbReference>
<dbReference type="SMR" id="Q65386"/>
<dbReference type="KEGG" id="vg:963867"/>
<dbReference type="Proteomes" id="UP000002339">
    <property type="component" value="Genome"/>
</dbReference>
<dbReference type="GO" id="GO:0039615">
    <property type="term" value="C:T=1 icosahedral viral capsid"/>
    <property type="evidence" value="ECO:0007669"/>
    <property type="project" value="UniProtKB-KW"/>
</dbReference>
<dbReference type="InterPro" id="IPR006753">
    <property type="entry name" value="Nanovirus_coat"/>
</dbReference>
<dbReference type="Pfam" id="PF04660">
    <property type="entry name" value="Nanovirus_coat"/>
    <property type="match status" value="1"/>
</dbReference>
<feature type="chain" id="PRO_0000378516" description="Capsid protein">
    <location>
        <begin position="1"/>
        <end position="175"/>
    </location>
</feature>
<feature type="region of interest" description="Disordered" evidence="1">
    <location>
        <begin position="1"/>
        <end position="35"/>
    </location>
</feature>
<feature type="compositionally biased region" description="Basic residues" evidence="1">
    <location>
        <begin position="9"/>
        <end position="25"/>
    </location>
</feature>
<sequence length="175" mass="20112">MFRQEMARYPKKSIKKRRVGRRKYGSKAATSHDYSSSGSILVPENTVKVFRIEPTDKTLPRYFIWKMFMLLVCKVKPGRILHWAMIKSSWEINQPTTCLEAPGLFIKPEHSHLVKLVCSGELEAGVATGTSDVECLLRKTTVLRKNVTEVDYLYLAFYCSSGVSINYQNRITYHV</sequence>
<keyword id="KW-0167">Capsid protein</keyword>
<keyword id="KW-1185">Reference proteome</keyword>
<keyword id="KW-1140">T=1 icosahedral capsid protein</keyword>
<keyword id="KW-0946">Virion</keyword>
<comment type="subcellular location">
    <subcellularLocation>
        <location evidence="2">Virion</location>
    </subcellularLocation>
</comment>
<comment type="similarity">
    <text evidence="2">Belongs to the nanoviridae capsid protein family.</text>
</comment>
<accession>Q65386</accession>
<evidence type="ECO:0000256" key="1">
    <source>
        <dbReference type="SAM" id="MobiDB-lite"/>
    </source>
</evidence>
<evidence type="ECO:0000305" key="2"/>